<gene>
    <name type="ordered locus">At5g26960</name>
    <name type="ORF">F2P16.220</name>
</gene>
<accession>Q6NPN5</accession>
<accession>O04638</accession>
<accession>Q67ZX2</accession>
<organism>
    <name type="scientific">Arabidopsis thaliana</name>
    <name type="common">Mouse-ear cress</name>
    <dbReference type="NCBI Taxonomy" id="3702"/>
    <lineage>
        <taxon>Eukaryota</taxon>
        <taxon>Viridiplantae</taxon>
        <taxon>Streptophyta</taxon>
        <taxon>Embryophyta</taxon>
        <taxon>Tracheophyta</taxon>
        <taxon>Spermatophyta</taxon>
        <taxon>Magnoliopsida</taxon>
        <taxon>eudicotyledons</taxon>
        <taxon>Gunneridae</taxon>
        <taxon>Pentapetalae</taxon>
        <taxon>rosids</taxon>
        <taxon>malvids</taxon>
        <taxon>Brassicales</taxon>
        <taxon>Brassicaceae</taxon>
        <taxon>Camelineae</taxon>
        <taxon>Arabidopsis</taxon>
    </lineage>
</organism>
<dbReference type="EMBL" id="AF007270">
    <property type="protein sequence ID" value="AAB61064.1"/>
    <property type="status" value="ALT_SEQ"/>
    <property type="molecule type" value="Genomic_DNA"/>
</dbReference>
<dbReference type="EMBL" id="CP002688">
    <property type="protein sequence ID" value="AED93634.1"/>
    <property type="molecule type" value="Genomic_DNA"/>
</dbReference>
<dbReference type="EMBL" id="BT010884">
    <property type="protein sequence ID" value="AAR24662.1"/>
    <property type="molecule type" value="mRNA"/>
</dbReference>
<dbReference type="EMBL" id="AK175995">
    <property type="protein sequence ID" value="BAD43758.1"/>
    <property type="molecule type" value="mRNA"/>
</dbReference>
<dbReference type="PIR" id="T01772">
    <property type="entry name" value="T01772"/>
</dbReference>
<dbReference type="RefSeq" id="NP_198048.1">
    <property type="nucleotide sequence ID" value="NM_122578.4"/>
</dbReference>
<dbReference type="SMR" id="Q6NPN5"/>
<dbReference type="BioGRID" id="18029">
    <property type="interactions" value="1"/>
</dbReference>
<dbReference type="FunCoup" id="Q6NPN5">
    <property type="interactions" value="155"/>
</dbReference>
<dbReference type="STRING" id="3702.Q6NPN5"/>
<dbReference type="PaxDb" id="3702-AT5G26960.1"/>
<dbReference type="EnsemblPlants" id="AT5G26960.1">
    <property type="protein sequence ID" value="AT5G26960.1"/>
    <property type="gene ID" value="AT5G26960"/>
</dbReference>
<dbReference type="GeneID" id="832754"/>
<dbReference type="Gramene" id="AT5G26960.1">
    <property type="protein sequence ID" value="AT5G26960.1"/>
    <property type="gene ID" value="AT5G26960"/>
</dbReference>
<dbReference type="KEGG" id="ath:AT5G26960"/>
<dbReference type="Araport" id="AT5G26960"/>
<dbReference type="TAIR" id="AT5G26960"/>
<dbReference type="eggNOG" id="KOG1072">
    <property type="taxonomic scope" value="Eukaryota"/>
</dbReference>
<dbReference type="HOGENOM" id="CLU_056077_0_0_1"/>
<dbReference type="InParanoid" id="Q6NPN5"/>
<dbReference type="OMA" id="SCFPNPN"/>
<dbReference type="PhylomeDB" id="Q6NPN5"/>
<dbReference type="PRO" id="PR:Q6NPN5"/>
<dbReference type="Proteomes" id="UP000006548">
    <property type="component" value="Chromosome 5"/>
</dbReference>
<dbReference type="ExpressionAtlas" id="Q6NPN5">
    <property type="expression patterns" value="baseline and differential"/>
</dbReference>
<dbReference type="CDD" id="cd22152">
    <property type="entry name" value="F-box_AtAFR-like"/>
    <property type="match status" value="1"/>
</dbReference>
<dbReference type="Gene3D" id="1.20.1280.50">
    <property type="match status" value="1"/>
</dbReference>
<dbReference type="Gene3D" id="2.120.10.80">
    <property type="entry name" value="Kelch-type beta propeller"/>
    <property type="match status" value="1"/>
</dbReference>
<dbReference type="InterPro" id="IPR036047">
    <property type="entry name" value="F-box-like_dom_sf"/>
</dbReference>
<dbReference type="InterPro" id="IPR001810">
    <property type="entry name" value="F-box_dom"/>
</dbReference>
<dbReference type="InterPro" id="IPR015915">
    <property type="entry name" value="Kelch-typ_b-propeller"/>
</dbReference>
<dbReference type="InterPro" id="IPR006652">
    <property type="entry name" value="Kelch_1"/>
</dbReference>
<dbReference type="PANTHER" id="PTHR46344:SF16">
    <property type="entry name" value="KELCH MOTIF FAMILY PROTEIN, EXPRESSED"/>
    <property type="match status" value="1"/>
</dbReference>
<dbReference type="PANTHER" id="PTHR46344">
    <property type="entry name" value="OS02G0202900 PROTEIN"/>
    <property type="match status" value="1"/>
</dbReference>
<dbReference type="Pfam" id="PF00646">
    <property type="entry name" value="F-box"/>
    <property type="match status" value="1"/>
</dbReference>
<dbReference type="Pfam" id="PF01344">
    <property type="entry name" value="Kelch_1"/>
    <property type="match status" value="1"/>
</dbReference>
<dbReference type="SMART" id="SM00256">
    <property type="entry name" value="FBOX"/>
    <property type="match status" value="1"/>
</dbReference>
<dbReference type="SMART" id="SM00612">
    <property type="entry name" value="Kelch"/>
    <property type="match status" value="2"/>
</dbReference>
<dbReference type="SUPFAM" id="SSF81383">
    <property type="entry name" value="F-box domain"/>
    <property type="match status" value="1"/>
</dbReference>
<dbReference type="SUPFAM" id="SSF117281">
    <property type="entry name" value="Kelch motif"/>
    <property type="match status" value="1"/>
</dbReference>
<dbReference type="PROSITE" id="PS50181">
    <property type="entry name" value="FBOX"/>
    <property type="match status" value="1"/>
</dbReference>
<proteinExistence type="evidence at transcript level"/>
<keyword id="KW-0880">Kelch repeat</keyword>
<keyword id="KW-1185">Reference proteome</keyword>
<keyword id="KW-0677">Repeat</keyword>
<protein>
    <recommendedName>
        <fullName>F-box/kelch-repeat protein At5g26960</fullName>
    </recommendedName>
</protein>
<name>FK113_ARATH</name>
<sequence length="413" mass="45013">MSENCNSRHFSWLMKSCLPNPSDAKSLVQIHQPSSTAANSSATIASLPDDLLLECISRVPSSSIPSLAVVCRRWSRLLHSPYFLHLRRRLGLLRHSLFAISTVDSGLFAADLQFQSEIASWKVSLAVSSRSVGVDGSYGSLSHARAAAIGPRVYVVSRNAVLRYDSWMGTLNLRSPMIFPRKKFAIAVVSGKIYVAGGGGGSEVAAAVEEYDPELNRWEVVTQSARKRYGCIGAAVDGVFYVIGGLKIGNETSRAVAARAYASSMDLFDVESRQWLRSRSVPGGGCVVAACAAVGYVYVLTSHAVELSFWRFDARRRGGNSGFGEWQRLKSPPLPAQVRLDGTVRFSCVGVEDKVAVVQVVGCIDDLLRRSGRGERGIRESLVLLYDTTEGEWRRAADLPEMITRAACACVEW</sequence>
<comment type="sequence caution" evidence="2">
    <conflict type="erroneous gene model prediction">
        <sequence resource="EMBL-CDS" id="AAB61064"/>
    </conflict>
    <text>The predicted gene At5g26950 has been split into 2 genes: At5g26950 and At5g26960.</text>
</comment>
<reference key="1">
    <citation type="journal article" date="2000" name="Nature">
        <title>Sequence and analysis of chromosome 5 of the plant Arabidopsis thaliana.</title>
        <authorList>
            <person name="Tabata S."/>
            <person name="Kaneko T."/>
            <person name="Nakamura Y."/>
            <person name="Kotani H."/>
            <person name="Kato T."/>
            <person name="Asamizu E."/>
            <person name="Miyajima N."/>
            <person name="Sasamoto S."/>
            <person name="Kimura T."/>
            <person name="Hosouchi T."/>
            <person name="Kawashima K."/>
            <person name="Kohara M."/>
            <person name="Matsumoto M."/>
            <person name="Matsuno A."/>
            <person name="Muraki A."/>
            <person name="Nakayama S."/>
            <person name="Nakazaki N."/>
            <person name="Naruo K."/>
            <person name="Okumura S."/>
            <person name="Shinpo S."/>
            <person name="Takeuchi C."/>
            <person name="Wada T."/>
            <person name="Watanabe A."/>
            <person name="Yamada M."/>
            <person name="Yasuda M."/>
            <person name="Sato S."/>
            <person name="de la Bastide M."/>
            <person name="Huang E."/>
            <person name="Spiegel L."/>
            <person name="Gnoj L."/>
            <person name="O'Shaughnessy A."/>
            <person name="Preston R."/>
            <person name="Habermann K."/>
            <person name="Murray J."/>
            <person name="Johnson D."/>
            <person name="Rohlfing T."/>
            <person name="Nelson J."/>
            <person name="Stoneking T."/>
            <person name="Pepin K."/>
            <person name="Spieth J."/>
            <person name="Sekhon M."/>
            <person name="Armstrong J."/>
            <person name="Becker M."/>
            <person name="Belter E."/>
            <person name="Cordum H."/>
            <person name="Cordes M."/>
            <person name="Courtney L."/>
            <person name="Courtney W."/>
            <person name="Dante M."/>
            <person name="Du H."/>
            <person name="Edwards J."/>
            <person name="Fryman J."/>
            <person name="Haakensen B."/>
            <person name="Lamar E."/>
            <person name="Latreille P."/>
            <person name="Leonard S."/>
            <person name="Meyer R."/>
            <person name="Mulvaney E."/>
            <person name="Ozersky P."/>
            <person name="Riley A."/>
            <person name="Strowmatt C."/>
            <person name="Wagner-McPherson C."/>
            <person name="Wollam A."/>
            <person name="Yoakum M."/>
            <person name="Bell M."/>
            <person name="Dedhia N."/>
            <person name="Parnell L."/>
            <person name="Shah R."/>
            <person name="Rodriguez M."/>
            <person name="Hoon See L."/>
            <person name="Vil D."/>
            <person name="Baker J."/>
            <person name="Kirchoff K."/>
            <person name="Toth K."/>
            <person name="King L."/>
            <person name="Bahret A."/>
            <person name="Miller B."/>
            <person name="Marra M.A."/>
            <person name="Martienssen R."/>
            <person name="McCombie W.R."/>
            <person name="Wilson R.K."/>
            <person name="Murphy G."/>
            <person name="Bancroft I."/>
            <person name="Volckaert G."/>
            <person name="Wambutt R."/>
            <person name="Duesterhoeft A."/>
            <person name="Stiekema W."/>
            <person name="Pohl T."/>
            <person name="Entian K.-D."/>
            <person name="Terryn N."/>
            <person name="Hartley N."/>
            <person name="Bent E."/>
            <person name="Johnson S."/>
            <person name="Langham S.-A."/>
            <person name="McCullagh B."/>
            <person name="Robben J."/>
            <person name="Grymonprez B."/>
            <person name="Zimmermann W."/>
            <person name="Ramsperger U."/>
            <person name="Wedler H."/>
            <person name="Balke K."/>
            <person name="Wedler E."/>
            <person name="Peters S."/>
            <person name="van Staveren M."/>
            <person name="Dirkse W."/>
            <person name="Mooijman P."/>
            <person name="Klein Lankhorst R."/>
            <person name="Weitzenegger T."/>
            <person name="Bothe G."/>
            <person name="Rose M."/>
            <person name="Hauf J."/>
            <person name="Berneiser S."/>
            <person name="Hempel S."/>
            <person name="Feldpausch M."/>
            <person name="Lamberth S."/>
            <person name="Villarroel R."/>
            <person name="Gielen J."/>
            <person name="Ardiles W."/>
            <person name="Bents O."/>
            <person name="Lemcke K."/>
            <person name="Kolesov G."/>
            <person name="Mayer K.F.X."/>
            <person name="Rudd S."/>
            <person name="Schoof H."/>
            <person name="Schueller C."/>
            <person name="Zaccaria P."/>
            <person name="Mewes H.-W."/>
            <person name="Bevan M."/>
            <person name="Fransz P.F."/>
        </authorList>
    </citation>
    <scope>NUCLEOTIDE SEQUENCE [LARGE SCALE GENOMIC DNA]</scope>
    <source>
        <strain>cv. Columbia</strain>
    </source>
</reference>
<reference key="2">
    <citation type="journal article" date="2017" name="Plant J.">
        <title>Araport11: a complete reannotation of the Arabidopsis thaliana reference genome.</title>
        <authorList>
            <person name="Cheng C.Y."/>
            <person name="Krishnakumar V."/>
            <person name="Chan A.P."/>
            <person name="Thibaud-Nissen F."/>
            <person name="Schobel S."/>
            <person name="Town C.D."/>
        </authorList>
    </citation>
    <scope>GENOME REANNOTATION</scope>
    <source>
        <strain>cv. Columbia</strain>
    </source>
</reference>
<reference key="3">
    <citation type="submission" date="2003-12" db="EMBL/GenBank/DDBJ databases">
        <title>Arabidopsis ORF clones.</title>
        <authorList>
            <person name="Kim C.J."/>
            <person name="Chen H."/>
            <person name="Cheuk R.F."/>
            <person name="Shinn P."/>
            <person name="Carninci P."/>
            <person name="Hayashizaki Y."/>
            <person name="Ishida J."/>
            <person name="Kamiya A."/>
            <person name="Kawai J."/>
            <person name="Narusaka M."/>
            <person name="Sakurai T."/>
            <person name="Satou M."/>
            <person name="Seki M."/>
            <person name="Shinozaki K."/>
            <person name="Ecker J.R."/>
        </authorList>
    </citation>
    <scope>NUCLEOTIDE SEQUENCE [LARGE SCALE MRNA]</scope>
    <source>
        <strain>cv. Columbia</strain>
    </source>
</reference>
<reference key="4">
    <citation type="submission" date="2004-09" db="EMBL/GenBank/DDBJ databases">
        <title>Large-scale analysis of RIKEN Arabidopsis full-length (RAFL) cDNAs.</title>
        <authorList>
            <person name="Totoki Y."/>
            <person name="Seki M."/>
            <person name="Ishida J."/>
            <person name="Nakajima M."/>
            <person name="Enju A."/>
            <person name="Kamiya A."/>
            <person name="Narusaka M."/>
            <person name="Shin-i T."/>
            <person name="Nakagawa M."/>
            <person name="Sakamoto N."/>
            <person name="Oishi K."/>
            <person name="Kohara Y."/>
            <person name="Kobayashi M."/>
            <person name="Toyoda A."/>
            <person name="Sakaki Y."/>
            <person name="Sakurai T."/>
            <person name="Iida K."/>
            <person name="Akiyama K."/>
            <person name="Satou M."/>
            <person name="Toyoda T."/>
            <person name="Konagaya A."/>
            <person name="Carninci P."/>
            <person name="Kawai J."/>
            <person name="Hayashizaki Y."/>
            <person name="Shinozaki K."/>
        </authorList>
    </citation>
    <scope>NUCLEOTIDE SEQUENCE [LARGE SCALE MRNA] OF 2-413</scope>
    <source>
        <strain>cv. Columbia</strain>
    </source>
</reference>
<feature type="chain" id="PRO_0000274965" description="F-box/kelch-repeat protein At5g26960">
    <location>
        <begin position="1"/>
        <end position="413"/>
    </location>
</feature>
<feature type="domain" description="F-box" evidence="1">
    <location>
        <begin position="41"/>
        <end position="90"/>
    </location>
</feature>
<feature type="repeat" description="Kelch 1">
    <location>
        <begin position="96"/>
        <end position="141"/>
    </location>
</feature>
<feature type="repeat" description="Kelch 2">
    <location>
        <begin position="152"/>
        <end position="191"/>
    </location>
</feature>
<feature type="repeat" description="Kelch 3">
    <location>
        <begin position="192"/>
        <end position="238"/>
    </location>
</feature>
<feature type="repeat" description="Kelch 4">
    <location>
        <begin position="240"/>
        <end position="295"/>
    </location>
</feature>
<feature type="repeat" description="Kelch 5">
    <location>
        <begin position="367"/>
        <end position="413"/>
    </location>
</feature>
<evidence type="ECO:0000255" key="1">
    <source>
        <dbReference type="PROSITE-ProRule" id="PRU00080"/>
    </source>
</evidence>
<evidence type="ECO:0000305" key="2"/>